<organism>
    <name type="scientific">Methanosarcina barkeri (strain Fusaro / DSM 804)</name>
    <dbReference type="NCBI Taxonomy" id="269797"/>
    <lineage>
        <taxon>Archaea</taxon>
        <taxon>Methanobacteriati</taxon>
        <taxon>Methanobacteriota</taxon>
        <taxon>Stenosarchaea group</taxon>
        <taxon>Methanomicrobia</taxon>
        <taxon>Methanosarcinales</taxon>
        <taxon>Methanosarcinaceae</taxon>
        <taxon>Methanosarcina</taxon>
    </lineage>
</organism>
<gene>
    <name evidence="1" type="primary">secG</name>
    <name type="ordered locus">Mbar_A1042</name>
</gene>
<name>SECG_METBF</name>
<reference key="1">
    <citation type="journal article" date="2006" name="J. Bacteriol.">
        <title>The Methanosarcina barkeri genome: comparative analysis with Methanosarcina acetivorans and Methanosarcina mazei reveals extensive rearrangement within methanosarcinal genomes.</title>
        <authorList>
            <person name="Maeder D.L."/>
            <person name="Anderson I."/>
            <person name="Brettin T.S."/>
            <person name="Bruce D.C."/>
            <person name="Gilna P."/>
            <person name="Han C.S."/>
            <person name="Lapidus A."/>
            <person name="Metcalf W.W."/>
            <person name="Saunders E."/>
            <person name="Tapia R."/>
            <person name="Sowers K.R."/>
        </authorList>
    </citation>
    <scope>NUCLEOTIDE SEQUENCE [LARGE SCALE GENOMIC DNA]</scope>
    <source>
        <strain>Fusaro / DSM 804</strain>
    </source>
</reference>
<sequence length="55" mass="5781">MAKKSGSGLQSSAGLMRYYEADKNAVQVQPKVVLIVGAIVGIAVLFLSAVNGFWP</sequence>
<proteinExistence type="inferred from homology"/>
<keyword id="KW-1003">Cell membrane</keyword>
<keyword id="KW-0472">Membrane</keyword>
<keyword id="KW-0653">Protein transport</keyword>
<keyword id="KW-0811">Translocation</keyword>
<keyword id="KW-0812">Transmembrane</keyword>
<keyword id="KW-1133">Transmembrane helix</keyword>
<keyword id="KW-0813">Transport</keyword>
<accession>Q46DN2</accession>
<dbReference type="EMBL" id="CP000099">
    <property type="protein sequence ID" value="AAZ70010.1"/>
    <property type="molecule type" value="Genomic_DNA"/>
</dbReference>
<dbReference type="SMR" id="Q46DN2"/>
<dbReference type="STRING" id="269797.Mbar_A1042"/>
<dbReference type="PaxDb" id="269797-Mbar_A1042"/>
<dbReference type="KEGG" id="mba:Mbar_A1042"/>
<dbReference type="eggNOG" id="arCOG02957">
    <property type="taxonomic scope" value="Archaea"/>
</dbReference>
<dbReference type="HOGENOM" id="CLU_208205_1_1_2"/>
<dbReference type="OrthoDB" id="43651at2157"/>
<dbReference type="GO" id="GO:0005886">
    <property type="term" value="C:plasma membrane"/>
    <property type="evidence" value="ECO:0007669"/>
    <property type="project" value="UniProtKB-SubCell"/>
</dbReference>
<dbReference type="GO" id="GO:0015031">
    <property type="term" value="P:protein transport"/>
    <property type="evidence" value="ECO:0007669"/>
    <property type="project" value="UniProtKB-UniRule"/>
</dbReference>
<dbReference type="HAMAP" id="MF_00751">
    <property type="entry name" value="SecG"/>
    <property type="match status" value="1"/>
</dbReference>
<dbReference type="InterPro" id="IPR023531">
    <property type="entry name" value="Preprot_translocase_SecG"/>
</dbReference>
<dbReference type="InterPro" id="IPR016482">
    <property type="entry name" value="SecG/Sec61-beta/Sbh"/>
</dbReference>
<dbReference type="NCBIfam" id="NF002318">
    <property type="entry name" value="PRK01253.1"/>
    <property type="match status" value="1"/>
</dbReference>
<dbReference type="Pfam" id="PF03911">
    <property type="entry name" value="Sec61_beta"/>
    <property type="match status" value="1"/>
</dbReference>
<evidence type="ECO:0000255" key="1">
    <source>
        <dbReference type="HAMAP-Rule" id="MF_00751"/>
    </source>
</evidence>
<feature type="chain" id="PRO_1000046577" description="Preprotein translocase subunit SecG">
    <location>
        <begin position="1"/>
        <end position="55"/>
    </location>
</feature>
<feature type="topological domain" description="Cytoplasmic" evidence="1">
    <location>
        <begin position="1"/>
        <end position="29"/>
    </location>
</feature>
<feature type="transmembrane region" description="Helical" evidence="1">
    <location>
        <begin position="30"/>
        <end position="51"/>
    </location>
</feature>
<feature type="topological domain" description="Extracellular" evidence="1">
    <location>
        <begin position="52"/>
        <end position="55"/>
    </location>
</feature>
<protein>
    <recommendedName>
        <fullName evidence="1">Preprotein translocase subunit SecG</fullName>
    </recommendedName>
    <alternativeName>
        <fullName evidence="1">Protein transport protein Sec61 subunit beta homolog</fullName>
    </alternativeName>
</protein>
<comment type="function">
    <text evidence="1">Involved in protein export. The function of the beta subunit is unknown, but it may be involved in stabilization of the trimeric complex.</text>
</comment>
<comment type="subunit">
    <text evidence="1">Component of the protein translocase complex. Heterotrimer consisting of alpha (SecY), beta (SecG) and gamma (SecE) subunits. Can form oligomers of the heterotrimer.</text>
</comment>
<comment type="subcellular location">
    <subcellularLocation>
        <location evidence="1">Cell membrane</location>
        <topology evidence="1">Single-pass membrane protein</topology>
    </subcellularLocation>
</comment>
<comment type="similarity">
    <text evidence="1">Belongs to the SEC61-beta family.</text>
</comment>